<accession>Q9KU84</accession>
<sequence>MSDKRRYFGTDGVRGKVGQYPITPDFVLKLGWAAGRVLAKQGTRKVIIGKDTRISGYMLESALEAGLAAAGLKATFTGPMPTPAVAYLTQTFRAEAGIVISASHNPYYDNGIKFFSYEGTKLPDDIELAIEAELDKDIECVESAELGKASRMVDAAGRYIEFCKSTFPSKLSLSGLKLVVDCANGATYHIAPNVFRELGAEVIAMGVEPNGLNINDQVGATDVRALQKRVVEEHAHLGLAFDGDGDRIIMVDHLGNKVDGDQIAYIIARDALRRGELKGGVVGTLMTNLGMENGLKQLGIPFVRAAVGDRYVMEKLLEKGWKIGAENSGHVILLDKVTTGDAIVAGLQVLASVVGSEMTLHELAKGMTLYPQVLENVRFAGDNNPLEADAVKAAVSEVEAELGSKGRVLLRKSGTEPLIRVMVEGEDETLVKQSALKIAQAVKDNC</sequence>
<evidence type="ECO:0000255" key="1">
    <source>
        <dbReference type="HAMAP-Rule" id="MF_01554"/>
    </source>
</evidence>
<gene>
    <name evidence="1" type="primary">glmM</name>
    <name type="ordered locus">VC_0639</name>
</gene>
<keyword id="KW-0413">Isomerase</keyword>
<keyword id="KW-0460">Magnesium</keyword>
<keyword id="KW-0479">Metal-binding</keyword>
<keyword id="KW-0597">Phosphoprotein</keyword>
<keyword id="KW-1185">Reference proteome</keyword>
<proteinExistence type="inferred from homology"/>
<feature type="chain" id="PRO_0000147996" description="Phosphoglucosamine mutase">
    <location>
        <begin position="1"/>
        <end position="446"/>
    </location>
</feature>
<feature type="active site" description="Phosphoserine intermediate" evidence="1">
    <location>
        <position position="103"/>
    </location>
</feature>
<feature type="binding site" description="via phosphate group" evidence="1">
    <location>
        <position position="103"/>
    </location>
    <ligand>
        <name>Mg(2+)</name>
        <dbReference type="ChEBI" id="CHEBI:18420"/>
    </ligand>
</feature>
<feature type="binding site" evidence="1">
    <location>
        <position position="242"/>
    </location>
    <ligand>
        <name>Mg(2+)</name>
        <dbReference type="ChEBI" id="CHEBI:18420"/>
    </ligand>
</feature>
<feature type="binding site" evidence="1">
    <location>
        <position position="244"/>
    </location>
    <ligand>
        <name>Mg(2+)</name>
        <dbReference type="ChEBI" id="CHEBI:18420"/>
    </ligand>
</feature>
<feature type="binding site" evidence="1">
    <location>
        <position position="246"/>
    </location>
    <ligand>
        <name>Mg(2+)</name>
        <dbReference type="ChEBI" id="CHEBI:18420"/>
    </ligand>
</feature>
<feature type="modified residue" description="Phosphoserine" evidence="1">
    <location>
        <position position="103"/>
    </location>
</feature>
<organism>
    <name type="scientific">Vibrio cholerae serotype O1 (strain ATCC 39315 / El Tor Inaba N16961)</name>
    <dbReference type="NCBI Taxonomy" id="243277"/>
    <lineage>
        <taxon>Bacteria</taxon>
        <taxon>Pseudomonadati</taxon>
        <taxon>Pseudomonadota</taxon>
        <taxon>Gammaproteobacteria</taxon>
        <taxon>Vibrionales</taxon>
        <taxon>Vibrionaceae</taxon>
        <taxon>Vibrio</taxon>
    </lineage>
</organism>
<dbReference type="EC" id="5.4.2.10" evidence="1"/>
<dbReference type="EMBL" id="AE003852">
    <property type="protein sequence ID" value="AAF93805.1"/>
    <property type="molecule type" value="Genomic_DNA"/>
</dbReference>
<dbReference type="PIR" id="G82299">
    <property type="entry name" value="G82299"/>
</dbReference>
<dbReference type="RefSeq" id="NP_230288.1">
    <property type="nucleotide sequence ID" value="NC_002505.1"/>
</dbReference>
<dbReference type="RefSeq" id="WP_001281065.1">
    <property type="nucleotide sequence ID" value="NZ_LT906614.1"/>
</dbReference>
<dbReference type="SMR" id="Q9KU84"/>
<dbReference type="STRING" id="243277.VC_0639"/>
<dbReference type="DNASU" id="2615427"/>
<dbReference type="EnsemblBacteria" id="AAF93805">
    <property type="protein sequence ID" value="AAF93805"/>
    <property type="gene ID" value="VC_0639"/>
</dbReference>
<dbReference type="KEGG" id="vch:VC_0639"/>
<dbReference type="PATRIC" id="fig|243277.26.peg.609"/>
<dbReference type="eggNOG" id="COG1109">
    <property type="taxonomic scope" value="Bacteria"/>
</dbReference>
<dbReference type="HOGENOM" id="CLU_016950_7_0_6"/>
<dbReference type="Proteomes" id="UP000000584">
    <property type="component" value="Chromosome 1"/>
</dbReference>
<dbReference type="GO" id="GO:0005829">
    <property type="term" value="C:cytosol"/>
    <property type="evidence" value="ECO:0000318"/>
    <property type="project" value="GO_Central"/>
</dbReference>
<dbReference type="GO" id="GO:0000287">
    <property type="term" value="F:magnesium ion binding"/>
    <property type="evidence" value="ECO:0007669"/>
    <property type="project" value="UniProtKB-UniRule"/>
</dbReference>
<dbReference type="GO" id="GO:0008966">
    <property type="term" value="F:phosphoglucosamine mutase activity"/>
    <property type="evidence" value="ECO:0000318"/>
    <property type="project" value="GO_Central"/>
</dbReference>
<dbReference type="GO" id="GO:0004615">
    <property type="term" value="F:phosphomannomutase activity"/>
    <property type="evidence" value="ECO:0000318"/>
    <property type="project" value="GO_Central"/>
</dbReference>
<dbReference type="GO" id="GO:0005975">
    <property type="term" value="P:carbohydrate metabolic process"/>
    <property type="evidence" value="ECO:0007669"/>
    <property type="project" value="InterPro"/>
</dbReference>
<dbReference type="GO" id="GO:0009252">
    <property type="term" value="P:peptidoglycan biosynthetic process"/>
    <property type="evidence" value="ECO:0000318"/>
    <property type="project" value="GO_Central"/>
</dbReference>
<dbReference type="GO" id="GO:0006048">
    <property type="term" value="P:UDP-N-acetylglucosamine biosynthetic process"/>
    <property type="evidence" value="ECO:0000318"/>
    <property type="project" value="GO_Central"/>
</dbReference>
<dbReference type="CDD" id="cd05802">
    <property type="entry name" value="GlmM"/>
    <property type="match status" value="1"/>
</dbReference>
<dbReference type="FunFam" id="3.30.310.50:FF:000001">
    <property type="entry name" value="Phosphoglucosamine mutase"/>
    <property type="match status" value="1"/>
</dbReference>
<dbReference type="FunFam" id="3.40.120.10:FF:000001">
    <property type="entry name" value="Phosphoglucosamine mutase"/>
    <property type="match status" value="1"/>
</dbReference>
<dbReference type="FunFam" id="3.40.120.10:FF:000003">
    <property type="entry name" value="Phosphoglucosamine mutase"/>
    <property type="match status" value="1"/>
</dbReference>
<dbReference type="Gene3D" id="3.40.120.10">
    <property type="entry name" value="Alpha-D-Glucose-1,6-Bisphosphate, subunit A, domain 3"/>
    <property type="match status" value="3"/>
</dbReference>
<dbReference type="Gene3D" id="3.30.310.50">
    <property type="entry name" value="Alpha-D-phosphohexomutase, C-terminal domain"/>
    <property type="match status" value="1"/>
</dbReference>
<dbReference type="HAMAP" id="MF_01554_B">
    <property type="entry name" value="GlmM_B"/>
    <property type="match status" value="1"/>
</dbReference>
<dbReference type="InterPro" id="IPR005844">
    <property type="entry name" value="A-D-PHexomutase_a/b/a-I"/>
</dbReference>
<dbReference type="InterPro" id="IPR016055">
    <property type="entry name" value="A-D-PHexomutase_a/b/a-I/II/III"/>
</dbReference>
<dbReference type="InterPro" id="IPR005845">
    <property type="entry name" value="A-D-PHexomutase_a/b/a-II"/>
</dbReference>
<dbReference type="InterPro" id="IPR005846">
    <property type="entry name" value="A-D-PHexomutase_a/b/a-III"/>
</dbReference>
<dbReference type="InterPro" id="IPR005843">
    <property type="entry name" value="A-D-PHexomutase_C"/>
</dbReference>
<dbReference type="InterPro" id="IPR036900">
    <property type="entry name" value="A-D-PHexomutase_C_sf"/>
</dbReference>
<dbReference type="InterPro" id="IPR016066">
    <property type="entry name" value="A-D-PHexomutase_CS"/>
</dbReference>
<dbReference type="InterPro" id="IPR005841">
    <property type="entry name" value="Alpha-D-phosphohexomutase_SF"/>
</dbReference>
<dbReference type="InterPro" id="IPR006352">
    <property type="entry name" value="GlmM_bact"/>
</dbReference>
<dbReference type="InterPro" id="IPR050060">
    <property type="entry name" value="Phosphoglucosamine_mutase"/>
</dbReference>
<dbReference type="NCBIfam" id="TIGR01455">
    <property type="entry name" value="glmM"/>
    <property type="match status" value="1"/>
</dbReference>
<dbReference type="NCBIfam" id="NF008139">
    <property type="entry name" value="PRK10887.1"/>
    <property type="match status" value="1"/>
</dbReference>
<dbReference type="PANTHER" id="PTHR42946:SF1">
    <property type="entry name" value="PHOSPHOGLUCOMUTASE (ALPHA-D-GLUCOSE-1,6-BISPHOSPHATE-DEPENDENT)"/>
    <property type="match status" value="1"/>
</dbReference>
<dbReference type="PANTHER" id="PTHR42946">
    <property type="entry name" value="PHOSPHOHEXOSE MUTASE"/>
    <property type="match status" value="1"/>
</dbReference>
<dbReference type="Pfam" id="PF02878">
    <property type="entry name" value="PGM_PMM_I"/>
    <property type="match status" value="1"/>
</dbReference>
<dbReference type="Pfam" id="PF02879">
    <property type="entry name" value="PGM_PMM_II"/>
    <property type="match status" value="1"/>
</dbReference>
<dbReference type="Pfam" id="PF02880">
    <property type="entry name" value="PGM_PMM_III"/>
    <property type="match status" value="1"/>
</dbReference>
<dbReference type="Pfam" id="PF00408">
    <property type="entry name" value="PGM_PMM_IV"/>
    <property type="match status" value="1"/>
</dbReference>
<dbReference type="PRINTS" id="PR00509">
    <property type="entry name" value="PGMPMM"/>
</dbReference>
<dbReference type="SUPFAM" id="SSF55957">
    <property type="entry name" value="Phosphoglucomutase, C-terminal domain"/>
    <property type="match status" value="1"/>
</dbReference>
<dbReference type="SUPFAM" id="SSF53738">
    <property type="entry name" value="Phosphoglucomutase, first 3 domains"/>
    <property type="match status" value="3"/>
</dbReference>
<dbReference type="PROSITE" id="PS00710">
    <property type="entry name" value="PGM_PMM"/>
    <property type="match status" value="1"/>
</dbReference>
<name>GLMM_VIBCH</name>
<reference key="1">
    <citation type="journal article" date="2000" name="Nature">
        <title>DNA sequence of both chromosomes of the cholera pathogen Vibrio cholerae.</title>
        <authorList>
            <person name="Heidelberg J.F."/>
            <person name="Eisen J.A."/>
            <person name="Nelson W.C."/>
            <person name="Clayton R.A."/>
            <person name="Gwinn M.L."/>
            <person name="Dodson R.J."/>
            <person name="Haft D.H."/>
            <person name="Hickey E.K."/>
            <person name="Peterson J.D."/>
            <person name="Umayam L.A."/>
            <person name="Gill S.R."/>
            <person name="Nelson K.E."/>
            <person name="Read T.D."/>
            <person name="Tettelin H."/>
            <person name="Richardson D.L."/>
            <person name="Ermolaeva M.D."/>
            <person name="Vamathevan J.J."/>
            <person name="Bass S."/>
            <person name="Qin H."/>
            <person name="Dragoi I."/>
            <person name="Sellers P."/>
            <person name="McDonald L.A."/>
            <person name="Utterback T.R."/>
            <person name="Fleischmann R.D."/>
            <person name="Nierman W.C."/>
            <person name="White O."/>
            <person name="Salzberg S.L."/>
            <person name="Smith H.O."/>
            <person name="Colwell R.R."/>
            <person name="Mekalanos J.J."/>
            <person name="Venter J.C."/>
            <person name="Fraser C.M."/>
        </authorList>
    </citation>
    <scope>NUCLEOTIDE SEQUENCE [LARGE SCALE GENOMIC DNA]</scope>
    <source>
        <strain>ATCC 39315 / El Tor Inaba N16961</strain>
    </source>
</reference>
<protein>
    <recommendedName>
        <fullName evidence="1">Phosphoglucosamine mutase</fullName>
        <ecNumber evidence="1">5.4.2.10</ecNumber>
    </recommendedName>
</protein>
<comment type="function">
    <text evidence="1">Catalyzes the conversion of glucosamine-6-phosphate to glucosamine-1-phosphate.</text>
</comment>
<comment type="catalytic activity">
    <reaction evidence="1">
        <text>alpha-D-glucosamine 1-phosphate = D-glucosamine 6-phosphate</text>
        <dbReference type="Rhea" id="RHEA:23424"/>
        <dbReference type="ChEBI" id="CHEBI:58516"/>
        <dbReference type="ChEBI" id="CHEBI:58725"/>
        <dbReference type="EC" id="5.4.2.10"/>
    </reaction>
</comment>
<comment type="cofactor">
    <cofactor evidence="1">
        <name>Mg(2+)</name>
        <dbReference type="ChEBI" id="CHEBI:18420"/>
    </cofactor>
    <text evidence="1">Binds 1 Mg(2+) ion per subunit.</text>
</comment>
<comment type="PTM">
    <text evidence="1">Activated by phosphorylation.</text>
</comment>
<comment type="similarity">
    <text evidence="1">Belongs to the phosphohexose mutase family.</text>
</comment>